<reference key="1">
    <citation type="journal article" date="2017" name="Genome Biol.">
        <title>Comparative genomics reveals high biological diversity and specific adaptations in the industrially and medically important fungal genus Aspergillus.</title>
        <authorList>
            <person name="de Vries R.P."/>
            <person name="Riley R."/>
            <person name="Wiebenga A."/>
            <person name="Aguilar-Osorio G."/>
            <person name="Amillis S."/>
            <person name="Uchima C.A."/>
            <person name="Anderluh G."/>
            <person name="Asadollahi M."/>
            <person name="Askin M."/>
            <person name="Barry K."/>
            <person name="Battaglia E."/>
            <person name="Bayram O."/>
            <person name="Benocci T."/>
            <person name="Braus-Stromeyer S.A."/>
            <person name="Caldana C."/>
            <person name="Canovas D."/>
            <person name="Cerqueira G.C."/>
            <person name="Chen F."/>
            <person name="Chen W."/>
            <person name="Choi C."/>
            <person name="Clum A."/>
            <person name="Dos Santos R.A."/>
            <person name="Damasio A.R."/>
            <person name="Diallinas G."/>
            <person name="Emri T."/>
            <person name="Fekete E."/>
            <person name="Flipphi M."/>
            <person name="Freyberg S."/>
            <person name="Gallo A."/>
            <person name="Gournas C."/>
            <person name="Habgood R."/>
            <person name="Hainaut M."/>
            <person name="Harispe M.L."/>
            <person name="Henrissat B."/>
            <person name="Hilden K.S."/>
            <person name="Hope R."/>
            <person name="Hossain A."/>
            <person name="Karabika E."/>
            <person name="Karaffa L."/>
            <person name="Karanyi Z."/>
            <person name="Krasevec N."/>
            <person name="Kuo A."/>
            <person name="Kusch H."/>
            <person name="LaButti K."/>
            <person name="Lagendijk E.L."/>
            <person name="Lapidus A."/>
            <person name="Levasseur A."/>
            <person name="Lindquist E."/>
            <person name="Lipzen A."/>
            <person name="Logrieco A.F."/>
            <person name="MacCabe A."/>
            <person name="Maekelae M.R."/>
            <person name="Malavazi I."/>
            <person name="Melin P."/>
            <person name="Meyer V."/>
            <person name="Mielnichuk N."/>
            <person name="Miskei M."/>
            <person name="Molnar A.P."/>
            <person name="Mule G."/>
            <person name="Ngan C.Y."/>
            <person name="Orejas M."/>
            <person name="Orosz E."/>
            <person name="Ouedraogo J.P."/>
            <person name="Overkamp K.M."/>
            <person name="Park H.-S."/>
            <person name="Perrone G."/>
            <person name="Piumi F."/>
            <person name="Punt P.J."/>
            <person name="Ram A.F."/>
            <person name="Ramon A."/>
            <person name="Rauscher S."/>
            <person name="Record E."/>
            <person name="Riano-Pachon D.M."/>
            <person name="Robert V."/>
            <person name="Roehrig J."/>
            <person name="Ruller R."/>
            <person name="Salamov A."/>
            <person name="Salih N.S."/>
            <person name="Samson R.A."/>
            <person name="Sandor E."/>
            <person name="Sanguinetti M."/>
            <person name="Schuetze T."/>
            <person name="Sepcic K."/>
            <person name="Shelest E."/>
            <person name="Sherlock G."/>
            <person name="Sophianopoulou V."/>
            <person name="Squina F.M."/>
            <person name="Sun H."/>
            <person name="Susca A."/>
            <person name="Todd R.B."/>
            <person name="Tsang A."/>
            <person name="Unkles S.E."/>
            <person name="van de Wiele N."/>
            <person name="van Rossen-Uffink D."/>
            <person name="Oliveira J.V."/>
            <person name="Vesth T.C."/>
            <person name="Visser J."/>
            <person name="Yu J.-H."/>
            <person name="Zhou M."/>
            <person name="Andersen M.R."/>
            <person name="Archer D.B."/>
            <person name="Baker S.E."/>
            <person name="Benoit I."/>
            <person name="Brakhage A.A."/>
            <person name="Braus G.H."/>
            <person name="Fischer R."/>
            <person name="Frisvad J.C."/>
            <person name="Goldman G.H."/>
            <person name="Houbraken J."/>
            <person name="Oakley B."/>
            <person name="Pocsi I."/>
            <person name="Scazzocchio C."/>
            <person name="Seiboth B."/>
            <person name="vanKuyk P.A."/>
            <person name="Wortman J."/>
            <person name="Dyer P.S."/>
            <person name="Grigoriev I.V."/>
        </authorList>
    </citation>
    <scope>NUCLEOTIDE SEQUENCE [LARGE SCALE GENOMIC DNA]</scope>
    <source>
        <strain>ATCC 16872 / CBS 172.66 / WB 5094</strain>
    </source>
</reference>
<reference key="2">
    <citation type="journal article" date="2017" name="Neoplasma">
        <title>Secalonic acid- F inhibited cell growth more effectively than 5-fluorouracil on hepatocellular carcinoma in vitro and in vivo.</title>
        <authorList>
            <person name="Gao X."/>
            <person name="Sun H.L."/>
            <person name="Liu D.S."/>
            <person name="Zhang J.R."/>
            <person name="Zhang J."/>
            <person name="Yan M.M."/>
            <person name="Pan X.H."/>
        </authorList>
    </citation>
    <scope>BIOTECHNOLOGY</scope>
</reference>
<reference key="3">
    <citation type="journal article" date="2018" name="Curr. Microbiol.">
        <title>Secondary Metabolites and Their Biological Activity from Aspergillus aculeatus KKU-CT2.</title>
        <authorList>
            <person name="Yodsing N."/>
            <person name="Lekphrom R."/>
            <person name="Sangsopha W."/>
            <person name="Aimi T."/>
            <person name="Boonlue S."/>
        </authorList>
    </citation>
    <scope>BIOTECHNOLOGY</scope>
</reference>
<reference key="4">
    <citation type="journal article" date="2019" name="Chem. Sci.">
        <title>Structure revision of cryptosporioptides and determination of the genetic basis for dimeric xanthone biosynthesis in fungi.</title>
        <authorList>
            <person name="Greco C."/>
            <person name="de Mattos-Shipley K."/>
            <person name="Bailey A.M."/>
            <person name="Mulholland N.P."/>
            <person name="Vincent J.L."/>
            <person name="Willis C.L."/>
            <person name="Cox R.J."/>
            <person name="Simpson T.J."/>
        </authorList>
    </citation>
    <scope>IDENTIFICATION</scope>
    <scope>FUNCTION</scope>
</reference>
<reference key="5">
    <citation type="journal article" date="2019" name="Molecules">
        <title>Secalonic Acid-F, a Novel Mycotoxin, Represses the Progression of Hepatocellular Carcinoma via MARCH1 Regulation of the PI3K/AKT/beta-catenin Signaling Pathway.</title>
        <authorList>
            <person name="Xie L."/>
            <person name="Li M."/>
            <person name="Liu D."/>
            <person name="Wang X."/>
            <person name="Wang P."/>
            <person name="Dai H."/>
            <person name="Yang W."/>
            <person name="Liu W."/>
            <person name="Hu X."/>
            <person name="Zhao M."/>
        </authorList>
    </citation>
    <scope>BIOTECHNOLOGY</scope>
</reference>
<reference key="6">
    <citation type="journal article" date="2020" name="ACS Omega">
        <title>Discovery of a Secalonic Acid Derivative from Aspergillus aculeatus, an Endophyte of Rosa damascena Mill., Triggers Apoptosis in MDA-MB-231 Triple Negative Breast Cancer Cells.</title>
        <authorList>
            <person name="Farooq S."/>
            <person name="Qayum A."/>
            <person name="Nalli Y."/>
            <person name="Lauro G."/>
            <person name="Chini M.G."/>
            <person name="Bifulco G."/>
            <person name="Chaubey A."/>
            <person name="Singh S.K."/>
            <person name="Riyaz-Ul-Hassan S."/>
            <person name="Ali A."/>
        </authorList>
    </citation>
    <scope>BIOTECHNOLOGY</scope>
</reference>
<reference key="7">
    <citation type="journal article" date="2021" name="J. Nat. Prod.">
        <title>Heterologous biosynthesis of tetrahydroxanthone dimers: determination of key factors for selective or divergent synthesis.</title>
        <authorList>
            <person name="Wei X."/>
            <person name="Chen X."/>
            <person name="Chen L."/>
            <person name="Yan D."/>
            <person name="Wang W.G."/>
            <person name="Matsuda Y."/>
        </authorList>
    </citation>
    <scope>FUNCTION</scope>
</reference>
<gene>
    <name evidence="9" type="primary">AacuS</name>
    <name type="ORF">ASPACDRAFT_6036</name>
</gene>
<comment type="function">
    <text evidence="5 7">Transcriptional coactivator; part of the gene cluster that mediates the biosynthesis of the tetrahydroxanthone dimer secalonic acid D.</text>
</comment>
<comment type="subcellular location">
    <subcellularLocation>
        <location evidence="10">Nucleus</location>
    </subcellularLocation>
</comment>
<comment type="biotechnology">
    <text evidence="2 3 4 6">Secalonic acids show unprecedented anticancer activities against various human cancer cells and might be interesting for further derivatization, targeting diseases such as cancer.</text>
</comment>
<sequence length="429" mass="46554">MLNLAQLQSQTRELLAALKQLTEHCPSAVDGTTEGMIPGLSPWSTTGESGEATRARETVLKCLAKLQVSLAGPIDVLQHMASQTQLLACLQWLGEFQVPACIPLDGSASIKDVAELIGVPENHICRIVRMAITAGFLQEPELGHVAHSPLSAAFVTNPSYLDAAMFLARITTPAALNMPSITRQRTAGMCERVNQVEQNNNIINMVTSSTLDETALPRLERQWYAYLRFGTGNLCDTATDIISCLNSFQGTSATVVEVGARSLDRAMTLANRYPTLRFIIQIHLPSSASGSGKDEAKYDRTRAIRSHSQITVQYRTPGTPQQIQDAAVYIINFPLPFPGVSSCSISAQLETELRAHLQALRLSPAATLVLTAPALPERGARGTEVAVLTRIRDLSFLQLANDREPEISELINLLNGVGDSEGRFVVVKK</sequence>
<proteinExistence type="evidence at protein level"/>
<organism>
    <name type="scientific">Aspergillus aculeatus (strain ATCC 16872 / CBS 172.66 / WB 5094)</name>
    <dbReference type="NCBI Taxonomy" id="690307"/>
    <lineage>
        <taxon>Eukaryota</taxon>
        <taxon>Fungi</taxon>
        <taxon>Dikarya</taxon>
        <taxon>Ascomycota</taxon>
        <taxon>Pezizomycotina</taxon>
        <taxon>Eurotiomycetes</taxon>
        <taxon>Eurotiomycetidae</taxon>
        <taxon>Eurotiales</taxon>
        <taxon>Aspergillaceae</taxon>
        <taxon>Aspergillus</taxon>
        <taxon>Aspergillus subgen. Circumdati</taxon>
    </lineage>
</organism>
<name>AACUS_ASPA1</name>
<keyword id="KW-0238">DNA-binding</keyword>
<keyword id="KW-0539">Nucleus</keyword>
<keyword id="KW-1185">Reference proteome</keyword>
<keyword id="KW-0804">Transcription</keyword>
<keyword id="KW-0805">Transcription regulation</keyword>
<evidence type="ECO:0000255" key="1">
    <source>
        <dbReference type="PROSITE-ProRule" id="PRU00393"/>
    </source>
</evidence>
<evidence type="ECO:0000269" key="2">
    <source>
    </source>
</evidence>
<evidence type="ECO:0000269" key="3">
    <source>
    </source>
</evidence>
<evidence type="ECO:0000269" key="4">
    <source>
    </source>
</evidence>
<evidence type="ECO:0000269" key="5">
    <source>
    </source>
</evidence>
<evidence type="ECO:0000269" key="6">
    <source>
    </source>
</evidence>
<evidence type="ECO:0000269" key="7">
    <source>
    </source>
</evidence>
<evidence type="ECO:0000303" key="8">
    <source>
    </source>
</evidence>
<evidence type="ECO:0000303" key="9">
    <source>
    </source>
</evidence>
<evidence type="ECO:0000305" key="10"/>
<protein>
    <recommendedName>
        <fullName evidence="8">Transcriptional coactivator AacuS</fullName>
    </recommendedName>
    <alternativeName>
        <fullName evidence="9">Secalonic acid biosynthesis cluster protein S</fullName>
    </alternativeName>
</protein>
<accession>A0A1L9WLK0</accession>
<dbReference type="EMBL" id="KV878984">
    <property type="protein sequence ID" value="OJJ97036.1"/>
    <property type="molecule type" value="Genomic_DNA"/>
</dbReference>
<dbReference type="RefSeq" id="XP_020053376.1">
    <property type="nucleotide sequence ID" value="XM_020203550.1"/>
</dbReference>
<dbReference type="SMR" id="A0A1L9WLK0"/>
<dbReference type="STRING" id="690307.A0A1L9WLK0"/>
<dbReference type="GeneID" id="30977364"/>
<dbReference type="VEuPathDB" id="FungiDB:ASPACDRAFT_6036"/>
<dbReference type="OMA" id="CSNELAT"/>
<dbReference type="OrthoDB" id="1606438at2759"/>
<dbReference type="Proteomes" id="UP000184546">
    <property type="component" value="Unassembled WGS sequence"/>
</dbReference>
<dbReference type="GO" id="GO:0005634">
    <property type="term" value="C:nucleus"/>
    <property type="evidence" value="ECO:0007669"/>
    <property type="project" value="UniProtKB-SubCell"/>
</dbReference>
<dbReference type="GO" id="GO:0003677">
    <property type="term" value="F:DNA binding"/>
    <property type="evidence" value="ECO:0007669"/>
    <property type="project" value="UniProtKB-KW"/>
</dbReference>
<dbReference type="Gene3D" id="3.40.50.150">
    <property type="entry name" value="Vaccinia Virus protein VP39"/>
    <property type="match status" value="1"/>
</dbReference>
<dbReference type="Gene3D" id="1.10.10.10">
    <property type="entry name" value="Winged helix-like DNA-binding domain superfamily/Winged helix DNA-binding domain"/>
    <property type="match status" value="1"/>
</dbReference>
<dbReference type="InterPro" id="IPR029063">
    <property type="entry name" value="SAM-dependent_MTases_sf"/>
</dbReference>
<dbReference type="InterPro" id="IPR036388">
    <property type="entry name" value="WH-like_DNA-bd_sf"/>
</dbReference>
<dbReference type="InterPro" id="IPR036390">
    <property type="entry name" value="WH_DNA-bd_sf"/>
</dbReference>
<dbReference type="PANTHER" id="PTHR43712:SF15">
    <property type="entry name" value="MONODICTYPHENONE CLUSTER TRANSCRIPTIONAL COACTIVATOR MDPA"/>
    <property type="match status" value="1"/>
</dbReference>
<dbReference type="PANTHER" id="PTHR43712">
    <property type="entry name" value="PUTATIVE (AFU_ORTHOLOGUE AFUA_4G14580)-RELATED"/>
    <property type="match status" value="1"/>
</dbReference>
<dbReference type="SUPFAM" id="SSF46785">
    <property type="entry name" value="Winged helix' DNA-binding domain"/>
    <property type="match status" value="1"/>
</dbReference>
<feature type="chain" id="PRO_0000453503" description="Transcriptional coactivator AacuS">
    <location>
        <begin position="1"/>
        <end position="429"/>
    </location>
</feature>
<feature type="domain" description="HTH iclR-type" evidence="1">
    <location>
        <begin position="80"/>
        <end position="144"/>
    </location>
</feature>
<feature type="DNA-binding region" description="H-T-H motif" evidence="1">
    <location>
        <begin position="110"/>
        <end position="129"/>
    </location>
</feature>